<comment type="function">
    <text evidence="1">Has an important function as a repair enzyme for proteins that have been inactivated by oxidation. Catalyzes the reversible oxidation-reduction of methionine sulfoxide in proteins to methionine.</text>
</comment>
<comment type="catalytic activity">
    <reaction evidence="1">
        <text>L-methionyl-[protein] + [thioredoxin]-disulfide + H2O = L-methionyl-(S)-S-oxide-[protein] + [thioredoxin]-dithiol</text>
        <dbReference type="Rhea" id="RHEA:14217"/>
        <dbReference type="Rhea" id="RHEA-COMP:10698"/>
        <dbReference type="Rhea" id="RHEA-COMP:10700"/>
        <dbReference type="Rhea" id="RHEA-COMP:12313"/>
        <dbReference type="Rhea" id="RHEA-COMP:12315"/>
        <dbReference type="ChEBI" id="CHEBI:15377"/>
        <dbReference type="ChEBI" id="CHEBI:16044"/>
        <dbReference type="ChEBI" id="CHEBI:29950"/>
        <dbReference type="ChEBI" id="CHEBI:44120"/>
        <dbReference type="ChEBI" id="CHEBI:50058"/>
        <dbReference type="EC" id="1.8.4.11"/>
    </reaction>
</comment>
<comment type="catalytic activity">
    <reaction evidence="1">
        <text>[thioredoxin]-disulfide + L-methionine + H2O = L-methionine (S)-S-oxide + [thioredoxin]-dithiol</text>
        <dbReference type="Rhea" id="RHEA:19993"/>
        <dbReference type="Rhea" id="RHEA-COMP:10698"/>
        <dbReference type="Rhea" id="RHEA-COMP:10700"/>
        <dbReference type="ChEBI" id="CHEBI:15377"/>
        <dbReference type="ChEBI" id="CHEBI:29950"/>
        <dbReference type="ChEBI" id="CHEBI:50058"/>
        <dbReference type="ChEBI" id="CHEBI:57844"/>
        <dbReference type="ChEBI" id="CHEBI:58772"/>
        <dbReference type="EC" id="1.8.4.11"/>
    </reaction>
</comment>
<comment type="similarity">
    <text evidence="1">Belongs to the MsrA Met sulfoxide reductase family.</text>
</comment>
<dbReference type="EC" id="1.8.4.11" evidence="1"/>
<dbReference type="EMBL" id="BA000034">
    <property type="protein sequence ID" value="BAC64623.1"/>
    <property type="molecule type" value="Genomic_DNA"/>
</dbReference>
<dbReference type="SMR" id="P0DC39"/>
<dbReference type="KEGG" id="sps:SPs1528"/>
<dbReference type="HOGENOM" id="CLU_031040_10_1_9"/>
<dbReference type="GO" id="GO:0033744">
    <property type="term" value="F:L-methionine:thioredoxin-disulfide S-oxidoreductase activity"/>
    <property type="evidence" value="ECO:0007669"/>
    <property type="project" value="RHEA"/>
</dbReference>
<dbReference type="GO" id="GO:0008113">
    <property type="term" value="F:peptide-methionine (S)-S-oxide reductase activity"/>
    <property type="evidence" value="ECO:0007669"/>
    <property type="project" value="UniProtKB-UniRule"/>
</dbReference>
<dbReference type="GO" id="GO:0036211">
    <property type="term" value="P:protein modification process"/>
    <property type="evidence" value="ECO:0007669"/>
    <property type="project" value="UniProtKB-UniRule"/>
</dbReference>
<dbReference type="Gene3D" id="3.30.1060.10">
    <property type="entry name" value="Peptide methionine sulphoxide reductase MsrA"/>
    <property type="match status" value="1"/>
</dbReference>
<dbReference type="HAMAP" id="MF_01401">
    <property type="entry name" value="MsrA"/>
    <property type="match status" value="1"/>
</dbReference>
<dbReference type="InterPro" id="IPR002569">
    <property type="entry name" value="Met_Sox_Rdtase_MsrA_dom"/>
</dbReference>
<dbReference type="InterPro" id="IPR036509">
    <property type="entry name" value="Met_Sox_Rdtase_MsrA_sf"/>
</dbReference>
<dbReference type="NCBIfam" id="TIGR00401">
    <property type="entry name" value="msrA"/>
    <property type="match status" value="1"/>
</dbReference>
<dbReference type="PANTHER" id="PTHR43774">
    <property type="entry name" value="PEPTIDE METHIONINE SULFOXIDE REDUCTASE"/>
    <property type="match status" value="1"/>
</dbReference>
<dbReference type="PANTHER" id="PTHR43774:SF1">
    <property type="entry name" value="PEPTIDE METHIONINE SULFOXIDE REDUCTASE MSRA 2"/>
    <property type="match status" value="1"/>
</dbReference>
<dbReference type="Pfam" id="PF01625">
    <property type="entry name" value="PMSR"/>
    <property type="match status" value="1"/>
</dbReference>
<dbReference type="SUPFAM" id="SSF55068">
    <property type="entry name" value="Peptide methionine sulfoxide reductase"/>
    <property type="match status" value="1"/>
</dbReference>
<accession>P0DC39</accession>
<accession>Q8K8E4</accession>
<name>MSRA_STRPQ</name>
<protein>
    <recommendedName>
        <fullName evidence="1">Peptide methionine sulfoxide reductase MsrA</fullName>
        <shortName evidence="1">Protein-methionine-S-oxide reductase</shortName>
        <ecNumber evidence="1">1.8.4.11</ecNumber>
    </recommendedName>
    <alternativeName>
        <fullName evidence="1">Peptide-methionine (S)-S-oxide reductase</fullName>
        <shortName evidence="1">Peptide Met(O) reductase</shortName>
    </alternativeName>
</protein>
<keyword id="KW-0560">Oxidoreductase</keyword>
<proteinExistence type="inferred from homology"/>
<reference key="1">
    <citation type="journal article" date="2003" name="Genome Res.">
        <title>Genome sequence of an M3 strain of Streptococcus pyogenes reveals a large-scale genomic rearrangement in invasive strains and new insights into phage evolution.</title>
        <authorList>
            <person name="Nakagawa I."/>
            <person name="Kurokawa K."/>
            <person name="Yamashita A."/>
            <person name="Nakata M."/>
            <person name="Tomiyasu Y."/>
            <person name="Okahashi N."/>
            <person name="Kawabata S."/>
            <person name="Yamazaki K."/>
            <person name="Shiba T."/>
            <person name="Yasunaga T."/>
            <person name="Hayashi H."/>
            <person name="Hattori M."/>
            <person name="Hamada S."/>
        </authorList>
    </citation>
    <scope>NUCLEOTIDE SEQUENCE [LARGE SCALE GENOMIC DNA]</scope>
    <source>
        <strain>SSI-1</strain>
    </source>
</reference>
<gene>
    <name evidence="1" type="primary">msrA.2</name>
    <name type="ordered locus">SPs1528</name>
</gene>
<evidence type="ECO:0000255" key="1">
    <source>
        <dbReference type="HAMAP-Rule" id="MF_01401"/>
    </source>
</evidence>
<sequence length="169" mass="19512">MERAIFAGGCFWCMVQPFEEQAGILSVRSGYTGGHLPNPSYEQVCAKTTGHTEAVEIIFDPEEISYKELVELYWVQTDPTDAFGQFEDRGDNYRPVIYYTTERQKEIAEQSKANLQASGRFDQPIVTTIEPAEPFYLAEDYHQGFYKKNPKRYAQSSAIRHQFLEENWS</sequence>
<feature type="chain" id="PRO_0000411407" description="Peptide methionine sulfoxide reductase MsrA">
    <location>
        <begin position="1"/>
        <end position="169"/>
    </location>
</feature>
<feature type="active site" evidence="1">
    <location>
        <position position="10"/>
    </location>
</feature>
<organism>
    <name type="scientific">Streptococcus pyogenes serotype M3 (strain SSI-1)</name>
    <dbReference type="NCBI Taxonomy" id="193567"/>
    <lineage>
        <taxon>Bacteria</taxon>
        <taxon>Bacillati</taxon>
        <taxon>Bacillota</taxon>
        <taxon>Bacilli</taxon>
        <taxon>Lactobacillales</taxon>
        <taxon>Streptococcaceae</taxon>
        <taxon>Streptococcus</taxon>
    </lineage>
</organism>